<evidence type="ECO:0000255" key="1">
    <source>
        <dbReference type="HAMAP-Rule" id="MF_00050"/>
    </source>
</evidence>
<comment type="function">
    <text evidence="1">Associates with the EF-Tu.GDP complex and induces the exchange of GDP to GTP. It remains bound to the aminoacyl-tRNA.EF-Tu.GTP complex up to the GTP hydrolysis stage on the ribosome.</text>
</comment>
<comment type="subcellular location">
    <subcellularLocation>
        <location evidence="1">Cytoplasm</location>
    </subcellularLocation>
</comment>
<comment type="similarity">
    <text evidence="1">Belongs to the EF-Ts family.</text>
</comment>
<name>EFTS_ANAD2</name>
<proteinExistence type="inferred from homology"/>
<reference key="1">
    <citation type="submission" date="2009-01" db="EMBL/GenBank/DDBJ databases">
        <title>Complete sequence of Anaeromyxobacter dehalogenans 2CP-1.</title>
        <authorList>
            <person name="Lucas S."/>
            <person name="Copeland A."/>
            <person name="Lapidus A."/>
            <person name="Glavina del Rio T."/>
            <person name="Dalin E."/>
            <person name="Tice H."/>
            <person name="Bruce D."/>
            <person name="Goodwin L."/>
            <person name="Pitluck S."/>
            <person name="Saunders E."/>
            <person name="Brettin T."/>
            <person name="Detter J.C."/>
            <person name="Han C."/>
            <person name="Larimer F."/>
            <person name="Land M."/>
            <person name="Hauser L."/>
            <person name="Kyrpides N."/>
            <person name="Ovchinnikova G."/>
            <person name="Beliaev A.S."/>
            <person name="Richardson P."/>
        </authorList>
    </citation>
    <scope>NUCLEOTIDE SEQUENCE [LARGE SCALE GENOMIC DNA]</scope>
    <source>
        <strain>2CP-1 / ATCC BAA-258</strain>
    </source>
</reference>
<gene>
    <name evidence="1" type="primary">tsf</name>
    <name type="ordered locus">A2cp1_0294</name>
</gene>
<keyword id="KW-0963">Cytoplasm</keyword>
<keyword id="KW-0251">Elongation factor</keyword>
<keyword id="KW-0648">Protein biosynthesis</keyword>
<organism>
    <name type="scientific">Anaeromyxobacter dehalogenans (strain 2CP-1 / ATCC BAA-258)</name>
    <dbReference type="NCBI Taxonomy" id="455488"/>
    <lineage>
        <taxon>Bacteria</taxon>
        <taxon>Pseudomonadati</taxon>
        <taxon>Myxococcota</taxon>
        <taxon>Myxococcia</taxon>
        <taxon>Myxococcales</taxon>
        <taxon>Cystobacterineae</taxon>
        <taxon>Anaeromyxobacteraceae</taxon>
        <taxon>Anaeromyxobacter</taxon>
    </lineage>
</organism>
<accession>B8J9V0</accession>
<feature type="chain" id="PRO_1000117554" description="Elongation factor Ts">
    <location>
        <begin position="1"/>
        <end position="219"/>
    </location>
</feature>
<feature type="region of interest" description="Involved in Mg(2+) ion dislocation from EF-Tu" evidence="1">
    <location>
        <begin position="82"/>
        <end position="85"/>
    </location>
</feature>
<protein>
    <recommendedName>
        <fullName evidence="1">Elongation factor Ts</fullName>
        <shortName evidence="1">EF-Ts</shortName>
    </recommendedName>
</protein>
<sequence>MAEISAKMVQELREKTGAGMMDCKKALTEAGGDLAKAEEVLRKKGLSAAAKKTGRAATEGAVASYIHMGGKIGVLVEVNCETDFVARTEGFQGLVKEIAMQVAAASPRWVRREEVPADVVAKELEIAKAQAREQKKPEAILEKIATGKVEKFYSEFCLMEQAWVKDDKKKIQDVLTDAVAKIGENIQIRRFARFVLGEGLEKKQENLAEEVAKAAGLQK</sequence>
<dbReference type="EMBL" id="CP001359">
    <property type="protein sequence ID" value="ACL63653.1"/>
    <property type="molecule type" value="Genomic_DNA"/>
</dbReference>
<dbReference type="RefSeq" id="WP_012631710.1">
    <property type="nucleotide sequence ID" value="NC_011891.1"/>
</dbReference>
<dbReference type="SMR" id="B8J9V0"/>
<dbReference type="KEGG" id="acp:A2cp1_0294"/>
<dbReference type="HOGENOM" id="CLU_047155_1_1_7"/>
<dbReference type="Proteomes" id="UP000007089">
    <property type="component" value="Chromosome"/>
</dbReference>
<dbReference type="GO" id="GO:0005737">
    <property type="term" value="C:cytoplasm"/>
    <property type="evidence" value="ECO:0007669"/>
    <property type="project" value="UniProtKB-SubCell"/>
</dbReference>
<dbReference type="GO" id="GO:0003746">
    <property type="term" value="F:translation elongation factor activity"/>
    <property type="evidence" value="ECO:0007669"/>
    <property type="project" value="UniProtKB-UniRule"/>
</dbReference>
<dbReference type="CDD" id="cd14275">
    <property type="entry name" value="UBA_EF-Ts"/>
    <property type="match status" value="1"/>
</dbReference>
<dbReference type="FunFam" id="1.10.286.20:FF:000001">
    <property type="entry name" value="Elongation factor Ts"/>
    <property type="match status" value="1"/>
</dbReference>
<dbReference type="FunFam" id="1.10.8.10:FF:000001">
    <property type="entry name" value="Elongation factor Ts"/>
    <property type="match status" value="1"/>
</dbReference>
<dbReference type="Gene3D" id="1.10.286.20">
    <property type="match status" value="1"/>
</dbReference>
<dbReference type="Gene3D" id="1.10.8.10">
    <property type="entry name" value="DNA helicase RuvA subunit, C-terminal domain"/>
    <property type="match status" value="1"/>
</dbReference>
<dbReference type="Gene3D" id="3.30.479.20">
    <property type="entry name" value="Elongation factor Ts, dimerisation domain"/>
    <property type="match status" value="1"/>
</dbReference>
<dbReference type="HAMAP" id="MF_00050">
    <property type="entry name" value="EF_Ts"/>
    <property type="match status" value="1"/>
</dbReference>
<dbReference type="InterPro" id="IPR036402">
    <property type="entry name" value="EF-Ts_dimer_sf"/>
</dbReference>
<dbReference type="InterPro" id="IPR001816">
    <property type="entry name" value="Transl_elong_EFTs/EF1B"/>
</dbReference>
<dbReference type="InterPro" id="IPR014039">
    <property type="entry name" value="Transl_elong_EFTs/EF1B_dimer"/>
</dbReference>
<dbReference type="InterPro" id="IPR018101">
    <property type="entry name" value="Transl_elong_Ts_CS"/>
</dbReference>
<dbReference type="InterPro" id="IPR009060">
    <property type="entry name" value="UBA-like_sf"/>
</dbReference>
<dbReference type="NCBIfam" id="TIGR00116">
    <property type="entry name" value="tsf"/>
    <property type="match status" value="2"/>
</dbReference>
<dbReference type="PANTHER" id="PTHR11741">
    <property type="entry name" value="ELONGATION FACTOR TS"/>
    <property type="match status" value="1"/>
</dbReference>
<dbReference type="PANTHER" id="PTHR11741:SF0">
    <property type="entry name" value="ELONGATION FACTOR TS, MITOCHONDRIAL"/>
    <property type="match status" value="1"/>
</dbReference>
<dbReference type="Pfam" id="PF00889">
    <property type="entry name" value="EF_TS"/>
    <property type="match status" value="1"/>
</dbReference>
<dbReference type="SUPFAM" id="SSF54713">
    <property type="entry name" value="Elongation factor Ts (EF-Ts), dimerisation domain"/>
    <property type="match status" value="1"/>
</dbReference>
<dbReference type="SUPFAM" id="SSF46934">
    <property type="entry name" value="UBA-like"/>
    <property type="match status" value="1"/>
</dbReference>
<dbReference type="PROSITE" id="PS01126">
    <property type="entry name" value="EF_TS_1"/>
    <property type="match status" value="1"/>
</dbReference>
<dbReference type="PROSITE" id="PS01127">
    <property type="entry name" value="EF_TS_2"/>
    <property type="match status" value="1"/>
</dbReference>